<keyword id="KW-0028">Amino-acid biosynthesis</keyword>
<keyword id="KW-0057">Aromatic amino acid biosynthesis</keyword>
<keyword id="KW-0963">Cytoplasm</keyword>
<keyword id="KW-1185">Reference proteome</keyword>
<keyword id="KW-0808">Transferase</keyword>
<proteinExistence type="inferred from homology"/>
<dbReference type="EC" id="2.5.1.19" evidence="1"/>
<dbReference type="EMBL" id="AP008955">
    <property type="protein sequence ID" value="BAH43458.1"/>
    <property type="molecule type" value="Genomic_DNA"/>
</dbReference>
<dbReference type="RefSeq" id="WP_012686165.1">
    <property type="nucleotide sequence ID" value="NC_012491.1"/>
</dbReference>
<dbReference type="SMR" id="C0ZCE9"/>
<dbReference type="STRING" id="358681.BBR47_24810"/>
<dbReference type="KEGG" id="bbe:BBR47_24810"/>
<dbReference type="eggNOG" id="COG0128">
    <property type="taxonomic scope" value="Bacteria"/>
</dbReference>
<dbReference type="HOGENOM" id="CLU_024321_0_1_9"/>
<dbReference type="UniPathway" id="UPA00053">
    <property type="reaction ID" value="UER00089"/>
</dbReference>
<dbReference type="Proteomes" id="UP000001877">
    <property type="component" value="Chromosome"/>
</dbReference>
<dbReference type="GO" id="GO:0005737">
    <property type="term" value="C:cytoplasm"/>
    <property type="evidence" value="ECO:0007669"/>
    <property type="project" value="UniProtKB-SubCell"/>
</dbReference>
<dbReference type="GO" id="GO:0003866">
    <property type="term" value="F:3-phosphoshikimate 1-carboxyvinyltransferase activity"/>
    <property type="evidence" value="ECO:0007669"/>
    <property type="project" value="UniProtKB-UniRule"/>
</dbReference>
<dbReference type="GO" id="GO:0008652">
    <property type="term" value="P:amino acid biosynthetic process"/>
    <property type="evidence" value="ECO:0007669"/>
    <property type="project" value="UniProtKB-KW"/>
</dbReference>
<dbReference type="GO" id="GO:0009073">
    <property type="term" value="P:aromatic amino acid family biosynthetic process"/>
    <property type="evidence" value="ECO:0007669"/>
    <property type="project" value="UniProtKB-KW"/>
</dbReference>
<dbReference type="GO" id="GO:0009423">
    <property type="term" value="P:chorismate biosynthetic process"/>
    <property type="evidence" value="ECO:0007669"/>
    <property type="project" value="UniProtKB-UniRule"/>
</dbReference>
<dbReference type="CDD" id="cd01556">
    <property type="entry name" value="EPSP_synthase"/>
    <property type="match status" value="1"/>
</dbReference>
<dbReference type="FunFam" id="3.65.10.10:FF:000005">
    <property type="entry name" value="3-phosphoshikimate 1-carboxyvinyltransferase"/>
    <property type="match status" value="1"/>
</dbReference>
<dbReference type="FunFam" id="3.65.10.10:FF:000006">
    <property type="entry name" value="3-phosphoshikimate 1-carboxyvinyltransferase"/>
    <property type="match status" value="1"/>
</dbReference>
<dbReference type="Gene3D" id="3.65.10.10">
    <property type="entry name" value="Enolpyruvate transferase domain"/>
    <property type="match status" value="2"/>
</dbReference>
<dbReference type="HAMAP" id="MF_00210">
    <property type="entry name" value="EPSP_synth"/>
    <property type="match status" value="1"/>
</dbReference>
<dbReference type="InterPro" id="IPR001986">
    <property type="entry name" value="Enolpyruvate_Tfrase_dom"/>
</dbReference>
<dbReference type="InterPro" id="IPR036968">
    <property type="entry name" value="Enolpyruvate_Tfrase_sf"/>
</dbReference>
<dbReference type="InterPro" id="IPR006264">
    <property type="entry name" value="EPSP_synthase"/>
</dbReference>
<dbReference type="InterPro" id="IPR023193">
    <property type="entry name" value="EPSP_synthase_CS"/>
</dbReference>
<dbReference type="InterPro" id="IPR013792">
    <property type="entry name" value="RNA3'P_cycl/enolpyr_Trfase_a/b"/>
</dbReference>
<dbReference type="NCBIfam" id="TIGR01356">
    <property type="entry name" value="aroA"/>
    <property type="match status" value="1"/>
</dbReference>
<dbReference type="PANTHER" id="PTHR21090">
    <property type="entry name" value="AROM/DEHYDROQUINATE SYNTHASE"/>
    <property type="match status" value="1"/>
</dbReference>
<dbReference type="PANTHER" id="PTHR21090:SF5">
    <property type="entry name" value="PENTAFUNCTIONAL AROM POLYPEPTIDE"/>
    <property type="match status" value="1"/>
</dbReference>
<dbReference type="Pfam" id="PF00275">
    <property type="entry name" value="EPSP_synthase"/>
    <property type="match status" value="1"/>
</dbReference>
<dbReference type="PIRSF" id="PIRSF000505">
    <property type="entry name" value="EPSPS"/>
    <property type="match status" value="1"/>
</dbReference>
<dbReference type="SUPFAM" id="SSF55205">
    <property type="entry name" value="EPT/RTPC-like"/>
    <property type="match status" value="1"/>
</dbReference>
<dbReference type="PROSITE" id="PS00104">
    <property type="entry name" value="EPSP_SYNTHASE_1"/>
    <property type="match status" value="1"/>
</dbReference>
<dbReference type="PROSITE" id="PS00885">
    <property type="entry name" value="EPSP_SYNTHASE_2"/>
    <property type="match status" value="1"/>
</dbReference>
<protein>
    <recommendedName>
        <fullName evidence="1">3-phosphoshikimate 1-carboxyvinyltransferase</fullName>
        <ecNumber evidence="1">2.5.1.19</ecNumber>
    </recommendedName>
    <alternativeName>
        <fullName evidence="1">5-enolpyruvylshikimate-3-phosphate synthase</fullName>
        <shortName evidence="1">EPSP synthase</shortName>
        <shortName evidence="1">EPSPS</shortName>
    </alternativeName>
</protein>
<organism>
    <name type="scientific">Brevibacillus brevis (strain 47 / JCM 6285 / NBRC 100599)</name>
    <dbReference type="NCBI Taxonomy" id="358681"/>
    <lineage>
        <taxon>Bacteria</taxon>
        <taxon>Bacillati</taxon>
        <taxon>Bacillota</taxon>
        <taxon>Bacilli</taxon>
        <taxon>Bacillales</taxon>
        <taxon>Paenibacillaceae</taxon>
        <taxon>Brevibacillus</taxon>
    </lineage>
</organism>
<name>AROA_BREBN</name>
<comment type="function">
    <text evidence="1">Catalyzes the transfer of the enolpyruvyl moiety of phosphoenolpyruvate (PEP) to the 5-hydroxyl of shikimate-3-phosphate (S3P) to produce enolpyruvyl shikimate-3-phosphate and inorganic phosphate.</text>
</comment>
<comment type="catalytic activity">
    <reaction evidence="1">
        <text>3-phosphoshikimate + phosphoenolpyruvate = 5-O-(1-carboxyvinyl)-3-phosphoshikimate + phosphate</text>
        <dbReference type="Rhea" id="RHEA:21256"/>
        <dbReference type="ChEBI" id="CHEBI:43474"/>
        <dbReference type="ChEBI" id="CHEBI:57701"/>
        <dbReference type="ChEBI" id="CHEBI:58702"/>
        <dbReference type="ChEBI" id="CHEBI:145989"/>
        <dbReference type="EC" id="2.5.1.19"/>
    </reaction>
    <physiologicalReaction direction="left-to-right" evidence="1">
        <dbReference type="Rhea" id="RHEA:21257"/>
    </physiologicalReaction>
</comment>
<comment type="pathway">
    <text evidence="1">Metabolic intermediate biosynthesis; chorismate biosynthesis; chorismate from D-erythrose 4-phosphate and phosphoenolpyruvate: step 6/7.</text>
</comment>
<comment type="subunit">
    <text evidence="1">Monomer.</text>
</comment>
<comment type="subcellular location">
    <subcellularLocation>
        <location evidence="1">Cytoplasm</location>
    </subcellularLocation>
</comment>
<comment type="similarity">
    <text evidence="1">Belongs to the EPSP synthase family.</text>
</comment>
<gene>
    <name evidence="1" type="primary">aroA</name>
    <name type="ordered locus">BBR47_24810</name>
</gene>
<sequence length="426" mass="45179">MLRVQQAKQIKGTVRVPGDKSISHRAVMFGALAEGTTTIEGFLPGADCLSTISCFRRMGIEIEQQGDAVTVQGKGWYGLQEPSQHLDVGNSGTTIRLMAGIMATQPFHVVMEGDESIAKRPMRRVIGPLRQMGAKIDGRKDGEYTPLSIRGGKLQGIAYQSPVASAQVKSAIMLAGLQAKGVTSVTEPHLSRDHTERMLQAFGVQVVRDGLTVSVEGGQKLKGRAISVPGDISSAAFLIAAVMVVPGSSLLIENVGINPSRTGIIDVVKAMGGSLELLNERIVNEEPVADLLVTHSELHGIEIAGDIIPRLIDEIPVIAVMATQAKGQTVIRDAEELKVKETDRIATVVSQLSKFGAKVTPTDDGMIIGGKTGLTGAIIDSMGDHRIGMAMAIAGLIAEGETKIENDEAIDVSFPGFHDLLVKISQ</sequence>
<accession>C0ZCE9</accession>
<feature type="chain" id="PRO_1000124671" description="3-phosphoshikimate 1-carboxyvinyltransferase">
    <location>
        <begin position="1"/>
        <end position="426"/>
    </location>
</feature>
<feature type="active site" description="Proton acceptor" evidence="1">
    <location>
        <position position="313"/>
    </location>
</feature>
<feature type="binding site" evidence="1">
    <location>
        <position position="20"/>
    </location>
    <ligand>
        <name>3-phosphoshikimate</name>
        <dbReference type="ChEBI" id="CHEBI:145989"/>
    </ligand>
</feature>
<feature type="binding site" evidence="1">
    <location>
        <position position="20"/>
    </location>
    <ligand>
        <name>phosphoenolpyruvate</name>
        <dbReference type="ChEBI" id="CHEBI:58702"/>
    </ligand>
</feature>
<feature type="binding site" evidence="1">
    <location>
        <position position="21"/>
    </location>
    <ligand>
        <name>3-phosphoshikimate</name>
        <dbReference type="ChEBI" id="CHEBI:145989"/>
    </ligand>
</feature>
<feature type="binding site" evidence="1">
    <location>
        <position position="25"/>
    </location>
    <ligand>
        <name>3-phosphoshikimate</name>
        <dbReference type="ChEBI" id="CHEBI:145989"/>
    </ligand>
</feature>
<feature type="binding site" evidence="1">
    <location>
        <position position="92"/>
    </location>
    <ligand>
        <name>phosphoenolpyruvate</name>
        <dbReference type="ChEBI" id="CHEBI:58702"/>
    </ligand>
</feature>
<feature type="binding site" evidence="1">
    <location>
        <position position="120"/>
    </location>
    <ligand>
        <name>phosphoenolpyruvate</name>
        <dbReference type="ChEBI" id="CHEBI:58702"/>
    </ligand>
</feature>
<feature type="binding site" evidence="1">
    <location>
        <position position="165"/>
    </location>
    <ligand>
        <name>3-phosphoshikimate</name>
        <dbReference type="ChEBI" id="CHEBI:145989"/>
    </ligand>
</feature>
<feature type="binding site" evidence="1">
    <location>
        <position position="167"/>
    </location>
    <ligand>
        <name>3-phosphoshikimate</name>
        <dbReference type="ChEBI" id="CHEBI:145989"/>
    </ligand>
</feature>
<feature type="binding site" evidence="1">
    <location>
        <position position="167"/>
    </location>
    <ligand>
        <name>phosphoenolpyruvate</name>
        <dbReference type="ChEBI" id="CHEBI:58702"/>
    </ligand>
</feature>
<feature type="binding site" evidence="1">
    <location>
        <position position="313"/>
    </location>
    <ligand>
        <name>3-phosphoshikimate</name>
        <dbReference type="ChEBI" id="CHEBI:145989"/>
    </ligand>
</feature>
<feature type="binding site" evidence="1">
    <location>
        <position position="340"/>
    </location>
    <ligand>
        <name>3-phosphoshikimate</name>
        <dbReference type="ChEBI" id="CHEBI:145989"/>
    </ligand>
</feature>
<feature type="binding site" evidence="1">
    <location>
        <position position="344"/>
    </location>
    <ligand>
        <name>phosphoenolpyruvate</name>
        <dbReference type="ChEBI" id="CHEBI:58702"/>
    </ligand>
</feature>
<feature type="binding site" evidence="1">
    <location>
        <position position="386"/>
    </location>
    <ligand>
        <name>phosphoenolpyruvate</name>
        <dbReference type="ChEBI" id="CHEBI:58702"/>
    </ligand>
</feature>
<evidence type="ECO:0000255" key="1">
    <source>
        <dbReference type="HAMAP-Rule" id="MF_00210"/>
    </source>
</evidence>
<reference key="1">
    <citation type="submission" date="2005-03" db="EMBL/GenBank/DDBJ databases">
        <title>Brevibacillus brevis strain 47, complete genome.</title>
        <authorList>
            <person name="Hosoyama A."/>
            <person name="Yamada R."/>
            <person name="Hongo Y."/>
            <person name="Terui Y."/>
            <person name="Ankai A."/>
            <person name="Masuyama W."/>
            <person name="Sekiguchi M."/>
            <person name="Takeda T."/>
            <person name="Asano K."/>
            <person name="Ohji S."/>
            <person name="Ichikawa N."/>
            <person name="Narita S."/>
            <person name="Aoki N."/>
            <person name="Miura H."/>
            <person name="Matsushita S."/>
            <person name="Sekigawa T."/>
            <person name="Yamagata H."/>
            <person name="Yoshikawa H."/>
            <person name="Udaka S."/>
            <person name="Tanikawa S."/>
            <person name="Fujita N."/>
        </authorList>
    </citation>
    <scope>NUCLEOTIDE SEQUENCE [LARGE SCALE GENOMIC DNA]</scope>
    <source>
        <strain>47 / JCM 6285 / NBRC 100599</strain>
    </source>
</reference>